<proteinExistence type="evidence at protein level"/>
<sequence length="305" mass="34437">MAQRLPWRFVAEWTSEGEMVLREVKRIYAAGATRYQEYMIAELAGIGKALVLDGKVQSSILDEHWYHEALVHPILLAHQCPRKVLVIGGGEGATVREVLRHSCVEHVTMVDIDEELVELAKKHLAEWHQGAFSSDKLELVIGDGRRYVENCHRKYDAIILDLVDPMEGGPAARLYTLEFYRAVKGCLRPGGAVVTQATSPTLSPRVYAVIRNTLAKVFTIVRPYVSYVRSYNGLWGFVAASDTVDPAKLSAKEVDELIAARIRGQLRFYDGETHEWMFRLPLPVRQVLSETRDYATDEKPVYVPV</sequence>
<name>SPEE2_HYPBU</name>
<protein>
    <recommendedName>
        <fullName evidence="1 4">Polyamine aminopropyltransferase 2</fullName>
    </recommendedName>
    <alternativeName>
        <fullName evidence="5">1,3-diaminopropane aminopropyltransferase</fullName>
        <ecNumber evidence="3">2.5.1.23</ecNumber>
    </alternativeName>
    <alternativeName>
        <fullName evidence="5">Sym-norspermidine synthase</fullName>
    </alternativeName>
</protein>
<reference key="1">
    <citation type="journal article" date="2007" name="Archaea">
        <title>The genome of Hyperthermus butylicus: a sulfur-reducing, peptide fermenting, neutrophilic Crenarchaeote growing up to 108 degrees C.</title>
        <authorList>
            <person name="Bruegger K."/>
            <person name="Chen L."/>
            <person name="Stark M."/>
            <person name="Zibat A."/>
            <person name="Redder P."/>
            <person name="Ruepp A."/>
            <person name="Awayez M."/>
            <person name="She Q."/>
            <person name="Garrett R.A."/>
            <person name="Klenk H.-P."/>
        </authorList>
    </citation>
    <scope>NUCLEOTIDE SEQUENCE [LARGE SCALE GENOMIC DNA]</scope>
    <source>
        <strain>DSM 5456 / JCM 9403 / PLM1-5</strain>
    </source>
</reference>
<reference key="2">
    <citation type="journal article" date="2009" name="FEBS Lett.">
        <title>Biosynthesis of long-chain polyamines by crenarchaeal polyamine synthases from Hyperthermus butylicus and Pyrobaculum aerophilum.</title>
        <authorList>
            <person name="Knott J.M."/>
        </authorList>
    </citation>
    <scope>FUNCTION</scope>
    <scope>CATALYTIC ACTIVITY</scope>
    <scope>SUBSTRATE SPECIFICITY</scope>
    <source>
        <strain>DSM 5456 / JCM 9403 / PLM1-5</strain>
    </source>
</reference>
<organism>
    <name type="scientific">Hyperthermus butylicus (strain DSM 5456 / JCM 9403 / PLM1-5)</name>
    <dbReference type="NCBI Taxonomy" id="415426"/>
    <lineage>
        <taxon>Archaea</taxon>
        <taxon>Thermoproteota</taxon>
        <taxon>Thermoprotei</taxon>
        <taxon>Desulfurococcales</taxon>
        <taxon>Pyrodictiaceae</taxon>
        <taxon>Hyperthermus</taxon>
    </lineage>
</organism>
<comment type="function">
    <text evidence="3">Involved in the biosynthesis of polyamines which are thought to support the growth of thermophilic microorganisms under high-temperature conditions. It seems that long-chain and branched-chain of polyamines effectively stabilize DNA and RNA, respectively. Catalyzes the irreversible transfer of a propylamine group from the amino donor S-adenosylmethioninamine (decarboxy-AdoMet) to 1,3-diaminopropane to yield sym-norspermidine (bis(3-aminopropyl)amine). It can also synthesize thermospermine from spermidine with a very low activity.</text>
</comment>
<comment type="catalytic activity">
    <reaction evidence="3">
        <text>S-adenosyl 3-(methylsulfanyl)propylamine + propane-1,3-diamine = norspermidine + S-methyl-5'-thioadenosine + H(+)</text>
        <dbReference type="Rhea" id="RHEA:23244"/>
        <dbReference type="ChEBI" id="CHEBI:15378"/>
        <dbReference type="ChEBI" id="CHEBI:17509"/>
        <dbReference type="ChEBI" id="CHEBI:57443"/>
        <dbReference type="ChEBI" id="CHEBI:57484"/>
        <dbReference type="ChEBI" id="CHEBI:57920"/>
        <dbReference type="EC" id="2.5.1.23"/>
    </reaction>
</comment>
<comment type="subunit">
    <text evidence="1">Homodimer or homotetramer.</text>
</comment>
<comment type="subcellular location">
    <subcellularLocation>
        <location evidence="1">Cytoplasm</location>
    </subcellularLocation>
</comment>
<comment type="similarity">
    <text evidence="1 2">Belongs to the spermidine/spermine synthase family.</text>
</comment>
<accession>A2BJU2</accession>
<gene>
    <name evidence="1 4" type="primary">speE2</name>
    <name type="ordered locus">Hbut_0383</name>
</gene>
<feature type="chain" id="PRO_0000431725" description="Polyamine aminopropyltransferase 2">
    <location>
        <begin position="1"/>
        <end position="305"/>
    </location>
</feature>
<feature type="domain" description="PABS" evidence="1">
    <location>
        <begin position="7"/>
        <end position="242"/>
    </location>
</feature>
<feature type="active site" description="Proton acceptor" evidence="1">
    <location>
        <position position="161"/>
    </location>
</feature>
<feature type="binding site" evidence="1">
    <location>
        <position position="36"/>
    </location>
    <ligand>
        <name>S-methyl-5'-thioadenosine</name>
        <dbReference type="ChEBI" id="CHEBI:17509"/>
    </ligand>
</feature>
<feature type="binding site" evidence="1">
    <location>
        <position position="67"/>
    </location>
    <ligand>
        <name>spermidine</name>
        <dbReference type="ChEBI" id="CHEBI:57834"/>
    </ligand>
</feature>
<feature type="binding site" evidence="1">
    <location>
        <position position="91"/>
    </location>
    <ligand>
        <name>spermidine</name>
        <dbReference type="ChEBI" id="CHEBI:57834"/>
    </ligand>
</feature>
<feature type="binding site" evidence="1">
    <location>
        <position position="111"/>
    </location>
    <ligand>
        <name>S-methyl-5'-thioadenosine</name>
        <dbReference type="ChEBI" id="CHEBI:17509"/>
    </ligand>
</feature>
<feature type="binding site" evidence="1">
    <location>
        <begin position="143"/>
        <end position="144"/>
    </location>
    <ligand>
        <name>S-methyl-5'-thioadenosine</name>
        <dbReference type="ChEBI" id="CHEBI:17509"/>
    </ligand>
</feature>
<feature type="binding site" evidence="1">
    <location>
        <position position="170"/>
    </location>
    <ligand>
        <name>S-methyl-5'-thioadenosine</name>
        <dbReference type="ChEBI" id="CHEBI:17509"/>
    </ligand>
</feature>
<evidence type="ECO:0000255" key="1">
    <source>
        <dbReference type="HAMAP-Rule" id="MF_00198"/>
    </source>
</evidence>
<evidence type="ECO:0000255" key="2">
    <source>
        <dbReference type="RuleBase" id="RU003836"/>
    </source>
</evidence>
<evidence type="ECO:0000269" key="3">
    <source>
    </source>
</evidence>
<evidence type="ECO:0000303" key="4">
    <source>
    </source>
</evidence>
<evidence type="ECO:0000305" key="5">
    <source>
    </source>
</evidence>
<dbReference type="EC" id="2.5.1.23" evidence="3"/>
<dbReference type="EMBL" id="CP000493">
    <property type="protein sequence ID" value="ABM80253.1"/>
    <property type="molecule type" value="Genomic_DNA"/>
</dbReference>
<dbReference type="RefSeq" id="WP_011821571.1">
    <property type="nucleotide sequence ID" value="NC_008818.1"/>
</dbReference>
<dbReference type="SMR" id="A2BJU2"/>
<dbReference type="STRING" id="415426.Hbut_0383"/>
<dbReference type="EnsemblBacteria" id="ABM80253">
    <property type="protein sequence ID" value="ABM80253"/>
    <property type="gene ID" value="Hbut_0383"/>
</dbReference>
<dbReference type="GeneID" id="4782683"/>
<dbReference type="KEGG" id="hbu:Hbut_0383"/>
<dbReference type="eggNOG" id="arCOG00050">
    <property type="taxonomic scope" value="Archaea"/>
</dbReference>
<dbReference type="HOGENOM" id="CLU_048199_0_1_2"/>
<dbReference type="OrthoDB" id="10538at2157"/>
<dbReference type="BioCyc" id="MetaCyc:MONOMER-21055"/>
<dbReference type="BRENDA" id="2.5.1.23">
    <property type="organism ID" value="10772"/>
</dbReference>
<dbReference type="Proteomes" id="UP000002593">
    <property type="component" value="Chromosome"/>
</dbReference>
<dbReference type="GO" id="GO:0005737">
    <property type="term" value="C:cytoplasm"/>
    <property type="evidence" value="ECO:0007669"/>
    <property type="project" value="UniProtKB-SubCell"/>
</dbReference>
<dbReference type="GO" id="GO:0004766">
    <property type="term" value="F:spermidine synthase activity"/>
    <property type="evidence" value="ECO:0007669"/>
    <property type="project" value="UniProtKB-UniRule"/>
</dbReference>
<dbReference type="GO" id="GO:0050314">
    <property type="term" value="F:sym-norspermidine synthase activity"/>
    <property type="evidence" value="ECO:0000314"/>
    <property type="project" value="UniProtKB"/>
</dbReference>
<dbReference type="GO" id="GO:0010487">
    <property type="term" value="F:thermospermine synthase activity"/>
    <property type="evidence" value="ECO:0000314"/>
    <property type="project" value="UniProtKB"/>
</dbReference>
<dbReference type="GO" id="GO:0006596">
    <property type="term" value="P:polyamine biosynthetic process"/>
    <property type="evidence" value="ECO:0000314"/>
    <property type="project" value="UniProtKB"/>
</dbReference>
<dbReference type="GO" id="GO:0008295">
    <property type="term" value="P:spermidine biosynthetic process"/>
    <property type="evidence" value="ECO:0007669"/>
    <property type="project" value="UniProtKB-UniRule"/>
</dbReference>
<dbReference type="CDD" id="cd02440">
    <property type="entry name" value="AdoMet_MTases"/>
    <property type="match status" value="1"/>
</dbReference>
<dbReference type="FunFam" id="3.40.50.150:FF:000088">
    <property type="entry name" value="Polyamine aminopropyltransferase"/>
    <property type="match status" value="1"/>
</dbReference>
<dbReference type="Gene3D" id="2.30.140.10">
    <property type="entry name" value="Spermidine synthase, tetramerisation domain"/>
    <property type="match status" value="1"/>
</dbReference>
<dbReference type="Gene3D" id="3.40.50.150">
    <property type="entry name" value="Vaccinia Virus protein VP39"/>
    <property type="match status" value="1"/>
</dbReference>
<dbReference type="HAMAP" id="MF_00198">
    <property type="entry name" value="Spermidine_synth"/>
    <property type="match status" value="1"/>
</dbReference>
<dbReference type="InterPro" id="IPR030374">
    <property type="entry name" value="PABS"/>
</dbReference>
<dbReference type="InterPro" id="IPR030373">
    <property type="entry name" value="PABS_CS"/>
</dbReference>
<dbReference type="InterPro" id="IPR029063">
    <property type="entry name" value="SAM-dependent_MTases_sf"/>
</dbReference>
<dbReference type="InterPro" id="IPR001045">
    <property type="entry name" value="Spermi_synthase"/>
</dbReference>
<dbReference type="InterPro" id="IPR037163">
    <property type="entry name" value="Spermidine_synt_N_sf"/>
</dbReference>
<dbReference type="NCBIfam" id="NF037959">
    <property type="entry name" value="MFS_SpdSyn"/>
    <property type="match status" value="1"/>
</dbReference>
<dbReference type="NCBIfam" id="NF002010">
    <property type="entry name" value="PRK00811.1"/>
    <property type="match status" value="1"/>
</dbReference>
<dbReference type="PANTHER" id="PTHR43317">
    <property type="entry name" value="THERMOSPERMINE SYNTHASE ACAULIS5"/>
    <property type="match status" value="1"/>
</dbReference>
<dbReference type="PANTHER" id="PTHR43317:SF1">
    <property type="entry name" value="THERMOSPERMINE SYNTHASE ACAULIS5"/>
    <property type="match status" value="1"/>
</dbReference>
<dbReference type="Pfam" id="PF01564">
    <property type="entry name" value="Spermine_synth"/>
    <property type="match status" value="1"/>
</dbReference>
<dbReference type="SUPFAM" id="SSF53335">
    <property type="entry name" value="S-adenosyl-L-methionine-dependent methyltransferases"/>
    <property type="match status" value="1"/>
</dbReference>
<dbReference type="PROSITE" id="PS01330">
    <property type="entry name" value="PABS_1"/>
    <property type="match status" value="1"/>
</dbReference>
<dbReference type="PROSITE" id="PS51006">
    <property type="entry name" value="PABS_2"/>
    <property type="match status" value="1"/>
</dbReference>
<keyword id="KW-0963">Cytoplasm</keyword>
<keyword id="KW-0620">Polyamine biosynthesis</keyword>
<keyword id="KW-1185">Reference proteome</keyword>
<keyword id="KW-0808">Transferase</keyword>